<comment type="function">
    <text evidence="7">Secreted effector that interacts with and inhibits host apoplastic pathogenesis-related papain-like cysteine proteases (Probable). Inhibition of host proteases by a pathogen extracellular protease inhibitor forms a specific type of defense-counterdefense mechanism between plants and microbial pathogens (Probable).</text>
</comment>
<comment type="subcellular location">
    <subcellularLocation>
        <location evidence="7">Secreted</location>
    </subcellularLocation>
    <text evidence="7">Localizes to host apoplast where it targets defense proteases for inhibition.</text>
</comment>
<comment type="induction">
    <text evidence="4">Expressed during infection of host plant and in germinating cysts.</text>
</comment>
<comment type="similarity">
    <text evidence="6">Belongs to the cystatin family.</text>
</comment>
<gene>
    <name evidence="5" type="primary">EPIC3</name>
    <name type="ORF">PITG_14891</name>
</gene>
<name>EPIC3_PHYIT</name>
<dbReference type="EMBL" id="DS028150">
    <property type="protein sequence ID" value="EEY62437.1"/>
    <property type="molecule type" value="Genomic_DNA"/>
</dbReference>
<dbReference type="RefSeq" id="XP_002899073.1">
    <property type="nucleotide sequence ID" value="XM_002899027.1"/>
</dbReference>
<dbReference type="SMR" id="D0NP95"/>
<dbReference type="STRING" id="403677.D0NP95"/>
<dbReference type="GlyCosmos" id="D0NP95">
    <property type="glycosylation" value="1 site, No reported glycans"/>
</dbReference>
<dbReference type="EnsemblProtists" id="PITG_14891T0">
    <property type="protein sequence ID" value="PITG_14891T0"/>
    <property type="gene ID" value="PITG_14891"/>
</dbReference>
<dbReference type="GeneID" id="9467999"/>
<dbReference type="KEGG" id="pif:PITG_14891"/>
<dbReference type="VEuPathDB" id="FungiDB:PITG_14891"/>
<dbReference type="eggNOG" id="ENOG502SST5">
    <property type="taxonomic scope" value="Eukaryota"/>
</dbReference>
<dbReference type="HOGENOM" id="CLU_117422_0_0_1"/>
<dbReference type="InParanoid" id="D0NP95"/>
<dbReference type="OMA" id="FQVAGCP"/>
<dbReference type="OrthoDB" id="164262at2759"/>
<dbReference type="Proteomes" id="UP000006643">
    <property type="component" value="Partially assembled WGS sequence"/>
</dbReference>
<dbReference type="GO" id="GO:0005576">
    <property type="term" value="C:extracellular region"/>
    <property type="evidence" value="ECO:0007669"/>
    <property type="project" value="UniProtKB-SubCell"/>
</dbReference>
<dbReference type="GO" id="GO:0004869">
    <property type="term" value="F:cysteine-type endopeptidase inhibitor activity"/>
    <property type="evidence" value="ECO:0007669"/>
    <property type="project" value="UniProtKB-KW"/>
</dbReference>
<dbReference type="GO" id="GO:0030414">
    <property type="term" value="F:peptidase inhibitor activity"/>
    <property type="evidence" value="ECO:0000250"/>
    <property type="project" value="UniProtKB"/>
</dbReference>
<dbReference type="CDD" id="cd00042">
    <property type="entry name" value="CY"/>
    <property type="match status" value="1"/>
</dbReference>
<dbReference type="Gene3D" id="3.10.450.10">
    <property type="match status" value="1"/>
</dbReference>
<dbReference type="InterPro" id="IPR000010">
    <property type="entry name" value="Cystatin_dom"/>
</dbReference>
<dbReference type="InterPro" id="IPR046350">
    <property type="entry name" value="Cystatin_sf"/>
</dbReference>
<dbReference type="SUPFAM" id="SSF54403">
    <property type="entry name" value="Cystatin/monellin"/>
    <property type="match status" value="1"/>
</dbReference>
<feature type="signal peptide" evidence="2">
    <location>
        <begin position="1"/>
        <end position="22"/>
    </location>
</feature>
<feature type="chain" id="PRO_5003013612" description="Cystatin-like cysteine protease inhibitor EPIC3">
    <location>
        <begin position="23"/>
        <end position="131"/>
    </location>
</feature>
<feature type="short sequence motif" description="Secondary area of contact" evidence="1">
    <location>
        <begin position="71"/>
        <end position="75"/>
    </location>
</feature>
<feature type="site" description="Reactive site" evidence="1">
    <location>
        <position position="27"/>
    </location>
</feature>
<feature type="glycosylation site" description="N-linked (GlcNAc...) asparagine" evidence="3">
    <location>
        <position position="33"/>
    </location>
</feature>
<sequence>MAFTRSIALFAGLALAASSAQGATILGGYTQKNATSDDIELLTQATSSANMYNKNVDTRICLIAIENLETQTVAGTNYKFQVAGCPVETDDELGACDDRNCDYSSYNIVIFSQPWSDTIEVTSITPAEYQG</sequence>
<reference key="1">
    <citation type="journal article" date="2009" name="Nature">
        <title>Genome sequence and analysis of the Irish potato famine pathogen Phytophthora infestans.</title>
        <authorList>
            <consortium name="The Broad Institute Genome Sequencing Platform"/>
            <person name="Haas B.J."/>
            <person name="Kamoun S."/>
            <person name="Zody M.C."/>
            <person name="Jiang R.H."/>
            <person name="Handsaker R.E."/>
            <person name="Cano L.M."/>
            <person name="Grabherr M."/>
            <person name="Kodira C.D."/>
            <person name="Raffaele S."/>
            <person name="Torto-Alalibo T."/>
            <person name="Bozkurt T.O."/>
            <person name="Ah-Fong A.M."/>
            <person name="Alvarado L."/>
            <person name="Anderson V.L."/>
            <person name="Armstrong M.R."/>
            <person name="Avrova A."/>
            <person name="Baxter L."/>
            <person name="Beynon J."/>
            <person name="Boevink P.C."/>
            <person name="Bollmann S.R."/>
            <person name="Bos J.I."/>
            <person name="Bulone V."/>
            <person name="Cai G."/>
            <person name="Cakir C."/>
            <person name="Carrington J.C."/>
            <person name="Chawner M."/>
            <person name="Conti L."/>
            <person name="Costanzo S."/>
            <person name="Ewan R."/>
            <person name="Fahlgren N."/>
            <person name="Fischbach M.A."/>
            <person name="Fugelstad J."/>
            <person name="Gilroy E.M."/>
            <person name="Gnerre S."/>
            <person name="Green P.J."/>
            <person name="Grenville-Briggs L.J."/>
            <person name="Griffith J."/>
            <person name="Grunwald N.J."/>
            <person name="Horn K."/>
            <person name="Horner N.R."/>
            <person name="Hu C.H."/>
            <person name="Huitema E."/>
            <person name="Jeong D.H."/>
            <person name="Jones A.M."/>
            <person name="Jones J.D."/>
            <person name="Jones R.W."/>
            <person name="Karlsson E.K."/>
            <person name="Kunjeti S.G."/>
            <person name="Lamour K."/>
            <person name="Liu Z."/>
            <person name="Ma L."/>
            <person name="Maclean D."/>
            <person name="Chibucos M.C."/>
            <person name="McDonald H."/>
            <person name="McWalters J."/>
            <person name="Meijer H.J."/>
            <person name="Morgan W."/>
            <person name="Morris P.F."/>
            <person name="Munro C.A."/>
            <person name="O'Neill K."/>
            <person name="Ospina-Giraldo M."/>
            <person name="Pinzon A."/>
            <person name="Pritchard L."/>
            <person name="Ramsahoye B."/>
            <person name="Ren Q."/>
            <person name="Restrepo S."/>
            <person name="Roy S."/>
            <person name="Sadanandom A."/>
            <person name="Savidor A."/>
            <person name="Schornack S."/>
            <person name="Schwartz D.C."/>
            <person name="Schumann U.D."/>
            <person name="Schwessinger B."/>
            <person name="Seyer L."/>
            <person name="Sharpe T."/>
            <person name="Silvar C."/>
            <person name="Song J."/>
            <person name="Studholme D.J."/>
            <person name="Sykes S."/>
            <person name="Thines M."/>
            <person name="van de Vondervoort P.J."/>
            <person name="Phuntumart V."/>
            <person name="Wawra S."/>
            <person name="Weide R."/>
            <person name="Win J."/>
            <person name="Young C."/>
            <person name="Zhou S."/>
            <person name="Fry W."/>
            <person name="Meyers B.C."/>
            <person name="van West P."/>
            <person name="Ristaino J."/>
            <person name="Govers F."/>
            <person name="Birch P.R."/>
            <person name="Whisson S.C."/>
            <person name="Judelson H.S."/>
            <person name="Nusbaum C."/>
        </authorList>
    </citation>
    <scope>NUCLEOTIDE SEQUENCE [LARGE SCALE GENOMIC DNA]</scope>
    <source>
        <strain>T30-4</strain>
    </source>
</reference>
<reference key="2">
    <citation type="journal article" date="2007" name="Plant Physiol.">
        <title>A Phytophthora infestans cystatin-like protein targets a novel tomato papain-like apoplastic protease.</title>
        <authorList>
            <person name="Tian M."/>
            <person name="Win J."/>
            <person name="Song J."/>
            <person name="van der Hoorn R."/>
            <person name="van der Knaap E."/>
            <person name="Kamoun S."/>
        </authorList>
    </citation>
    <scope>IDENTIFICATION</scope>
    <scope>INDUCTION</scope>
</reference>
<keyword id="KW-0325">Glycoprotein</keyword>
<keyword id="KW-0646">Protease inhibitor</keyword>
<keyword id="KW-1185">Reference proteome</keyword>
<keyword id="KW-0964">Secreted</keyword>
<keyword id="KW-0732">Signal</keyword>
<keyword id="KW-0789">Thiol protease inhibitor</keyword>
<keyword id="KW-0843">Virulence</keyword>
<organism>
    <name type="scientific">Phytophthora infestans (strain T30-4)</name>
    <name type="common">Potato late blight agent</name>
    <dbReference type="NCBI Taxonomy" id="403677"/>
    <lineage>
        <taxon>Eukaryota</taxon>
        <taxon>Sar</taxon>
        <taxon>Stramenopiles</taxon>
        <taxon>Oomycota</taxon>
        <taxon>Peronosporales</taxon>
        <taxon>Peronosporaceae</taxon>
        <taxon>Phytophthora</taxon>
    </lineage>
</organism>
<protein>
    <recommendedName>
        <fullName evidence="5">Cystatin-like cysteine protease inhibitor EPIC3</fullName>
    </recommendedName>
    <alternativeName>
        <fullName evidence="5">Extracellular protease inhibitor with cystatin-like domain protein 3</fullName>
    </alternativeName>
    <alternativeName>
        <fullName evidence="5">Secreted effector EPIC3</fullName>
    </alternativeName>
</protein>
<proteinExistence type="evidence at transcript level"/>
<evidence type="ECO:0000250" key="1">
    <source>
        <dbReference type="UniProtKB" id="P01040"/>
    </source>
</evidence>
<evidence type="ECO:0000255" key="2"/>
<evidence type="ECO:0000255" key="3">
    <source>
        <dbReference type="PROSITE-ProRule" id="PRU00498"/>
    </source>
</evidence>
<evidence type="ECO:0000269" key="4">
    <source>
    </source>
</evidence>
<evidence type="ECO:0000303" key="5">
    <source>
    </source>
</evidence>
<evidence type="ECO:0000305" key="6"/>
<evidence type="ECO:0000305" key="7">
    <source>
    </source>
</evidence>
<accession>D0NP95</accession>